<keyword id="KW-0274">FAD</keyword>
<keyword id="KW-0285">Flavoprotein</keyword>
<keyword id="KW-0489">Methyltransferase</keyword>
<keyword id="KW-0521">NADP</keyword>
<keyword id="KW-0545">Nucleotide biosynthesis</keyword>
<keyword id="KW-0808">Transferase</keyword>
<reference key="1">
    <citation type="submission" date="2007-02" db="EMBL/GenBank/DDBJ databases">
        <title>Complete sequence of Mycobacterium sp. JLS.</title>
        <authorList>
            <consortium name="US DOE Joint Genome Institute"/>
            <person name="Copeland A."/>
            <person name="Lucas S."/>
            <person name="Lapidus A."/>
            <person name="Barry K."/>
            <person name="Detter J.C."/>
            <person name="Glavina del Rio T."/>
            <person name="Hammon N."/>
            <person name="Israni S."/>
            <person name="Dalin E."/>
            <person name="Tice H."/>
            <person name="Pitluck S."/>
            <person name="Chain P."/>
            <person name="Malfatti S."/>
            <person name="Shin M."/>
            <person name="Vergez L."/>
            <person name="Schmutz J."/>
            <person name="Larimer F."/>
            <person name="Land M."/>
            <person name="Hauser L."/>
            <person name="Kyrpides N."/>
            <person name="Mikhailova N."/>
            <person name="Miller C.D."/>
            <person name="Anderson A.J."/>
            <person name="Sims R.C."/>
            <person name="Richardson P."/>
        </authorList>
    </citation>
    <scope>NUCLEOTIDE SEQUENCE [LARGE SCALE GENOMIC DNA]</scope>
    <source>
        <strain>JLS</strain>
    </source>
</reference>
<gene>
    <name evidence="1" type="primary">thyX</name>
    <name type="ordered locus">Mjls_2102</name>
</gene>
<accession>A3PYB1</accession>
<proteinExistence type="inferred from homology"/>
<organism>
    <name type="scientific">Mycobacterium sp. (strain JLS)</name>
    <dbReference type="NCBI Taxonomy" id="164757"/>
    <lineage>
        <taxon>Bacteria</taxon>
        <taxon>Bacillati</taxon>
        <taxon>Actinomycetota</taxon>
        <taxon>Actinomycetes</taxon>
        <taxon>Mycobacteriales</taxon>
        <taxon>Mycobacteriaceae</taxon>
        <taxon>Mycobacterium</taxon>
    </lineage>
</organism>
<name>THYX_MYCSJ</name>
<dbReference type="EC" id="2.1.1.148" evidence="1"/>
<dbReference type="EMBL" id="CP000580">
    <property type="protein sequence ID" value="ABN97888.1"/>
    <property type="molecule type" value="Genomic_DNA"/>
</dbReference>
<dbReference type="SMR" id="A3PYB1"/>
<dbReference type="KEGG" id="mjl:Mjls_2102"/>
<dbReference type="HOGENOM" id="CLU_077585_1_0_11"/>
<dbReference type="BioCyc" id="MSP164757:G1G8C-2121-MONOMER"/>
<dbReference type="UniPathway" id="UPA00575"/>
<dbReference type="GO" id="GO:0050660">
    <property type="term" value="F:flavin adenine dinucleotide binding"/>
    <property type="evidence" value="ECO:0007669"/>
    <property type="project" value="InterPro"/>
</dbReference>
<dbReference type="GO" id="GO:0070402">
    <property type="term" value="F:NADPH binding"/>
    <property type="evidence" value="ECO:0007669"/>
    <property type="project" value="TreeGrafter"/>
</dbReference>
<dbReference type="GO" id="GO:0050797">
    <property type="term" value="F:thymidylate synthase (FAD) activity"/>
    <property type="evidence" value="ECO:0007669"/>
    <property type="project" value="UniProtKB-UniRule"/>
</dbReference>
<dbReference type="GO" id="GO:0004799">
    <property type="term" value="F:thymidylate synthase activity"/>
    <property type="evidence" value="ECO:0007669"/>
    <property type="project" value="TreeGrafter"/>
</dbReference>
<dbReference type="GO" id="GO:0006231">
    <property type="term" value="P:dTMP biosynthetic process"/>
    <property type="evidence" value="ECO:0007669"/>
    <property type="project" value="UniProtKB-UniRule"/>
</dbReference>
<dbReference type="GO" id="GO:0006235">
    <property type="term" value="P:dTTP biosynthetic process"/>
    <property type="evidence" value="ECO:0007669"/>
    <property type="project" value="UniProtKB-UniRule"/>
</dbReference>
<dbReference type="GO" id="GO:0032259">
    <property type="term" value="P:methylation"/>
    <property type="evidence" value="ECO:0007669"/>
    <property type="project" value="UniProtKB-KW"/>
</dbReference>
<dbReference type="CDD" id="cd20175">
    <property type="entry name" value="ThyX"/>
    <property type="match status" value="1"/>
</dbReference>
<dbReference type="Gene3D" id="3.30.1360.170">
    <property type="match status" value="1"/>
</dbReference>
<dbReference type="Gene3D" id="3.30.70.3180">
    <property type="match status" value="1"/>
</dbReference>
<dbReference type="HAMAP" id="MF_01408">
    <property type="entry name" value="ThyX"/>
    <property type="match status" value="1"/>
</dbReference>
<dbReference type="InterPro" id="IPR003669">
    <property type="entry name" value="Thymidylate_synthase_ThyX"/>
</dbReference>
<dbReference type="InterPro" id="IPR036098">
    <property type="entry name" value="Thymidylate_synthase_ThyX_sf"/>
</dbReference>
<dbReference type="NCBIfam" id="TIGR02170">
    <property type="entry name" value="thyX"/>
    <property type="match status" value="1"/>
</dbReference>
<dbReference type="PANTHER" id="PTHR34934">
    <property type="entry name" value="FLAVIN-DEPENDENT THYMIDYLATE SYNTHASE"/>
    <property type="match status" value="1"/>
</dbReference>
<dbReference type="PANTHER" id="PTHR34934:SF1">
    <property type="entry name" value="FLAVIN-DEPENDENT THYMIDYLATE SYNTHASE"/>
    <property type="match status" value="1"/>
</dbReference>
<dbReference type="Pfam" id="PF02511">
    <property type="entry name" value="Thy1"/>
    <property type="match status" value="1"/>
</dbReference>
<dbReference type="SUPFAM" id="SSF69796">
    <property type="entry name" value="Thymidylate synthase-complementing protein Thy1"/>
    <property type="match status" value="1"/>
</dbReference>
<dbReference type="PROSITE" id="PS51331">
    <property type="entry name" value="THYX"/>
    <property type="match status" value="1"/>
</dbReference>
<protein>
    <recommendedName>
        <fullName evidence="1">Flavin-dependent thymidylate synthase</fullName>
        <shortName evidence="1">FDTS</shortName>
        <ecNumber evidence="1">2.1.1.148</ecNumber>
    </recommendedName>
    <alternativeName>
        <fullName evidence="1">FAD-dependent thymidylate synthase</fullName>
    </alternativeName>
    <alternativeName>
        <fullName evidence="1">Thymidylate synthase ThyX</fullName>
        <shortName evidence="1">TS</shortName>
        <shortName evidence="1">TSase</shortName>
    </alternativeName>
</protein>
<evidence type="ECO:0000255" key="1">
    <source>
        <dbReference type="HAMAP-Rule" id="MF_01408"/>
    </source>
</evidence>
<evidence type="ECO:0000255" key="2">
    <source>
        <dbReference type="PROSITE-ProRule" id="PRU00661"/>
    </source>
</evidence>
<comment type="function">
    <text evidence="1">Catalyzes the reductive methylation of 2'-deoxyuridine-5'-monophosphate (dUMP) to 2'-deoxythymidine-5'-monophosphate (dTMP) while utilizing 5,10-methylenetetrahydrofolate (mTHF) as the methyl donor, and NADPH and FADH(2) as the reductant.</text>
</comment>
<comment type="catalytic activity">
    <reaction evidence="1">
        <text>dUMP + (6R)-5,10-methylene-5,6,7,8-tetrahydrofolate + NADPH + H(+) = dTMP + (6S)-5,6,7,8-tetrahydrofolate + NADP(+)</text>
        <dbReference type="Rhea" id="RHEA:29043"/>
        <dbReference type="ChEBI" id="CHEBI:15378"/>
        <dbReference type="ChEBI" id="CHEBI:15636"/>
        <dbReference type="ChEBI" id="CHEBI:57453"/>
        <dbReference type="ChEBI" id="CHEBI:57783"/>
        <dbReference type="ChEBI" id="CHEBI:58349"/>
        <dbReference type="ChEBI" id="CHEBI:63528"/>
        <dbReference type="ChEBI" id="CHEBI:246422"/>
        <dbReference type="EC" id="2.1.1.148"/>
    </reaction>
</comment>
<comment type="cofactor">
    <cofactor evidence="1">
        <name>FAD</name>
        <dbReference type="ChEBI" id="CHEBI:57692"/>
    </cofactor>
    <text evidence="1">Binds 4 FAD per tetramer. Each FAD binding site is formed by three monomers.</text>
</comment>
<comment type="pathway">
    <text evidence="1">Pyrimidine metabolism; dTTP biosynthesis.</text>
</comment>
<comment type="subunit">
    <text evidence="1">Homotetramer.</text>
</comment>
<comment type="similarity">
    <text evidence="1">Belongs to the thymidylate synthase ThyX family.</text>
</comment>
<sequence>MAETAPLRVQLIARTEFTVPPDVPWETDAEGGAALVEFAGRACYQSWSKPNPRTATNASYLRHIIEVGHLSVLEHASVSFYITGISRSCTHELIRHRHFSYSQLSQRYVPENDSQVVVPPGIEGDAELEGLFTAAADASRAAYAELLAKLEAKLMGDEPREGRATLRRKQARQAARSVLPNATETRIVVTGNYRAWRHFIAMRASEHADLEIRRLAIACLRELVAVAPAVFADFEIYPLADGTEVATTPLVTEA</sequence>
<feature type="chain" id="PRO_1000184596" description="Flavin-dependent thymidylate synthase">
    <location>
        <begin position="1"/>
        <end position="254"/>
    </location>
</feature>
<feature type="domain" description="ThyX" evidence="2">
    <location>
        <begin position="7"/>
        <end position="237"/>
    </location>
</feature>
<feature type="short sequence motif" description="ThyX motif" evidence="1">
    <location>
        <begin position="95"/>
        <end position="105"/>
    </location>
</feature>
<feature type="active site" description="Involved in ionization of N3 of dUMP, leading to its activation" evidence="1">
    <location>
        <position position="203"/>
    </location>
</feature>
<feature type="binding site" evidence="1">
    <location>
        <position position="71"/>
    </location>
    <ligand>
        <name>FAD</name>
        <dbReference type="ChEBI" id="CHEBI:57692"/>
        <note>ligand shared between neighboring subunits</note>
    </ligand>
</feature>
<feature type="binding site" evidence="1">
    <location>
        <begin position="92"/>
        <end position="95"/>
    </location>
    <ligand>
        <name>dUMP</name>
        <dbReference type="ChEBI" id="CHEBI:246422"/>
        <note>ligand shared between dimeric partners</note>
    </ligand>
</feature>
<feature type="binding site" evidence="1">
    <location>
        <begin position="95"/>
        <end position="97"/>
    </location>
    <ligand>
        <name>FAD</name>
        <dbReference type="ChEBI" id="CHEBI:57692"/>
        <note>ligand shared between neighboring subunits</note>
    </ligand>
</feature>
<feature type="binding site" description="in other chain" evidence="1">
    <location>
        <begin position="103"/>
        <end position="107"/>
    </location>
    <ligand>
        <name>dUMP</name>
        <dbReference type="ChEBI" id="CHEBI:246422"/>
        <note>ligand shared between dimeric partners</note>
    </ligand>
</feature>
<feature type="binding site" evidence="1">
    <location>
        <position position="103"/>
    </location>
    <ligand>
        <name>FAD</name>
        <dbReference type="ChEBI" id="CHEBI:57692"/>
        <note>ligand shared between neighboring subunits</note>
    </ligand>
</feature>
<feature type="binding site" description="in other chain" evidence="1">
    <location>
        <position position="176"/>
    </location>
    <ligand>
        <name>dUMP</name>
        <dbReference type="ChEBI" id="CHEBI:246422"/>
        <note>ligand shared between dimeric partners</note>
    </ligand>
</feature>
<feature type="binding site" evidence="1">
    <location>
        <begin position="192"/>
        <end position="194"/>
    </location>
    <ligand>
        <name>FAD</name>
        <dbReference type="ChEBI" id="CHEBI:57692"/>
        <note>ligand shared between neighboring subunits</note>
    </ligand>
</feature>
<feature type="binding site" evidence="1">
    <location>
        <position position="198"/>
    </location>
    <ligand>
        <name>FAD</name>
        <dbReference type="ChEBI" id="CHEBI:57692"/>
        <note>ligand shared between neighboring subunits</note>
    </ligand>
</feature>
<feature type="binding site" evidence="1">
    <location>
        <position position="203"/>
    </location>
    <ligand>
        <name>dUMP</name>
        <dbReference type="ChEBI" id="CHEBI:246422"/>
        <note>ligand shared between dimeric partners</note>
    </ligand>
</feature>